<dbReference type="EC" id="2.7.4.3" evidence="1"/>
<dbReference type="EMBL" id="CP000359">
    <property type="protein sequence ID" value="ABF46141.1"/>
    <property type="molecule type" value="Genomic_DNA"/>
</dbReference>
<dbReference type="RefSeq" id="WP_011530971.1">
    <property type="nucleotide sequence ID" value="NC_008025.1"/>
</dbReference>
<dbReference type="SMR" id="Q1IX93"/>
<dbReference type="STRING" id="319795.Dgeo_1846"/>
<dbReference type="KEGG" id="dge:Dgeo_1846"/>
<dbReference type="eggNOG" id="COG0563">
    <property type="taxonomic scope" value="Bacteria"/>
</dbReference>
<dbReference type="HOGENOM" id="CLU_032354_4_1_0"/>
<dbReference type="UniPathway" id="UPA00588">
    <property type="reaction ID" value="UER00649"/>
</dbReference>
<dbReference type="Proteomes" id="UP000002431">
    <property type="component" value="Chromosome"/>
</dbReference>
<dbReference type="GO" id="GO:0005737">
    <property type="term" value="C:cytoplasm"/>
    <property type="evidence" value="ECO:0007669"/>
    <property type="project" value="UniProtKB-SubCell"/>
</dbReference>
<dbReference type="GO" id="GO:0004017">
    <property type="term" value="F:adenylate kinase activity"/>
    <property type="evidence" value="ECO:0007669"/>
    <property type="project" value="UniProtKB-UniRule"/>
</dbReference>
<dbReference type="GO" id="GO:0005524">
    <property type="term" value="F:ATP binding"/>
    <property type="evidence" value="ECO:0007669"/>
    <property type="project" value="UniProtKB-UniRule"/>
</dbReference>
<dbReference type="GO" id="GO:0044209">
    <property type="term" value="P:AMP salvage"/>
    <property type="evidence" value="ECO:0007669"/>
    <property type="project" value="UniProtKB-UniRule"/>
</dbReference>
<dbReference type="CDD" id="cd01428">
    <property type="entry name" value="ADK"/>
    <property type="match status" value="1"/>
</dbReference>
<dbReference type="Gene3D" id="3.40.50.300">
    <property type="entry name" value="P-loop containing nucleotide triphosphate hydrolases"/>
    <property type="match status" value="1"/>
</dbReference>
<dbReference type="HAMAP" id="MF_00235">
    <property type="entry name" value="Adenylate_kinase_Adk"/>
    <property type="match status" value="1"/>
</dbReference>
<dbReference type="InterPro" id="IPR000850">
    <property type="entry name" value="Adenylat/UMP-CMP_kin"/>
</dbReference>
<dbReference type="InterPro" id="IPR033690">
    <property type="entry name" value="Adenylat_kinase_CS"/>
</dbReference>
<dbReference type="InterPro" id="IPR027417">
    <property type="entry name" value="P-loop_NTPase"/>
</dbReference>
<dbReference type="NCBIfam" id="NF001381">
    <property type="entry name" value="PRK00279.1-3"/>
    <property type="match status" value="1"/>
</dbReference>
<dbReference type="NCBIfam" id="NF011100">
    <property type="entry name" value="PRK14527.1"/>
    <property type="match status" value="1"/>
</dbReference>
<dbReference type="NCBIfam" id="NF011104">
    <property type="entry name" value="PRK14531.1"/>
    <property type="match status" value="1"/>
</dbReference>
<dbReference type="NCBIfam" id="NF011105">
    <property type="entry name" value="PRK14532.1"/>
    <property type="match status" value="1"/>
</dbReference>
<dbReference type="PANTHER" id="PTHR23359">
    <property type="entry name" value="NUCLEOTIDE KINASE"/>
    <property type="match status" value="1"/>
</dbReference>
<dbReference type="Pfam" id="PF00406">
    <property type="entry name" value="ADK"/>
    <property type="match status" value="1"/>
</dbReference>
<dbReference type="PRINTS" id="PR00094">
    <property type="entry name" value="ADENYLTKNASE"/>
</dbReference>
<dbReference type="SUPFAM" id="SSF52540">
    <property type="entry name" value="P-loop containing nucleoside triphosphate hydrolases"/>
    <property type="match status" value="1"/>
</dbReference>
<dbReference type="PROSITE" id="PS00113">
    <property type="entry name" value="ADENYLATE_KINASE"/>
    <property type="match status" value="1"/>
</dbReference>
<name>KAD_DEIGD</name>
<evidence type="ECO:0000255" key="1">
    <source>
        <dbReference type="HAMAP-Rule" id="MF_00235"/>
    </source>
</evidence>
<comment type="function">
    <text evidence="1">Catalyzes the reversible transfer of the terminal phosphate group between ATP and AMP. Plays an important role in cellular energy homeostasis and in adenine nucleotide metabolism.</text>
</comment>
<comment type="catalytic activity">
    <reaction evidence="1">
        <text>AMP + ATP = 2 ADP</text>
        <dbReference type="Rhea" id="RHEA:12973"/>
        <dbReference type="ChEBI" id="CHEBI:30616"/>
        <dbReference type="ChEBI" id="CHEBI:456215"/>
        <dbReference type="ChEBI" id="CHEBI:456216"/>
        <dbReference type="EC" id="2.7.4.3"/>
    </reaction>
</comment>
<comment type="pathway">
    <text evidence="1">Purine metabolism; AMP biosynthesis via salvage pathway; AMP from ADP: step 1/1.</text>
</comment>
<comment type="subunit">
    <text evidence="1">Monomer.</text>
</comment>
<comment type="subcellular location">
    <subcellularLocation>
        <location evidence="1">Cytoplasm</location>
    </subcellularLocation>
</comment>
<comment type="domain">
    <text evidence="1">Consists of three domains, a large central CORE domain and two small peripheral domains, NMPbind and LID, which undergo movements during catalysis. The LID domain closes over the site of phosphoryl transfer upon ATP binding. Assembling and dissambling the active center during each catalytic cycle provides an effective means to prevent ATP hydrolysis.</text>
</comment>
<comment type="similarity">
    <text evidence="1">Belongs to the adenylate kinase family.</text>
</comment>
<sequence>MTQSKNKVVIFLGPPGAGKGTQAERLAREQNLAKISTGDILRDHVARGTALGQRVKPILDAGQLVPDDILIALIRDRLAGMEPVRVIFDGFPRTCAQAEALDMLLEELGAPVSAVPLLEVPDETLIERIVERGRQAALRGEPVRSDDTEEVARRRQQVYREQTQPLIDYYAARGHLQHVNGVGTPDEVYNRILQVVR</sequence>
<feature type="chain" id="PRO_1000058821" description="Adenylate kinase">
    <location>
        <begin position="1"/>
        <end position="197"/>
    </location>
</feature>
<feature type="region of interest" description="NMP" evidence="1">
    <location>
        <begin position="36"/>
        <end position="65"/>
    </location>
</feature>
<feature type="region of interest" description="LID" evidence="1">
    <location>
        <begin position="131"/>
        <end position="147"/>
    </location>
</feature>
<feature type="binding site" evidence="1">
    <location>
        <begin position="16"/>
        <end position="21"/>
    </location>
    <ligand>
        <name>ATP</name>
        <dbReference type="ChEBI" id="CHEBI:30616"/>
    </ligand>
</feature>
<feature type="binding site" evidence="1">
    <location>
        <position position="37"/>
    </location>
    <ligand>
        <name>AMP</name>
        <dbReference type="ChEBI" id="CHEBI:456215"/>
    </ligand>
</feature>
<feature type="binding site" evidence="1">
    <location>
        <position position="42"/>
    </location>
    <ligand>
        <name>AMP</name>
        <dbReference type="ChEBI" id="CHEBI:456215"/>
    </ligand>
</feature>
<feature type="binding site" evidence="1">
    <location>
        <begin position="63"/>
        <end position="65"/>
    </location>
    <ligand>
        <name>AMP</name>
        <dbReference type="ChEBI" id="CHEBI:456215"/>
    </ligand>
</feature>
<feature type="binding site" evidence="1">
    <location>
        <begin position="90"/>
        <end position="93"/>
    </location>
    <ligand>
        <name>AMP</name>
        <dbReference type="ChEBI" id="CHEBI:456215"/>
    </ligand>
</feature>
<feature type="binding site" evidence="1">
    <location>
        <position position="97"/>
    </location>
    <ligand>
        <name>AMP</name>
        <dbReference type="ChEBI" id="CHEBI:456215"/>
    </ligand>
</feature>
<feature type="binding site" evidence="1">
    <location>
        <position position="132"/>
    </location>
    <ligand>
        <name>ATP</name>
        <dbReference type="ChEBI" id="CHEBI:30616"/>
    </ligand>
</feature>
<feature type="binding site" evidence="1">
    <location>
        <position position="144"/>
    </location>
    <ligand>
        <name>AMP</name>
        <dbReference type="ChEBI" id="CHEBI:456215"/>
    </ligand>
</feature>
<feature type="binding site" evidence="1">
    <location>
        <position position="155"/>
    </location>
    <ligand>
        <name>AMP</name>
        <dbReference type="ChEBI" id="CHEBI:456215"/>
    </ligand>
</feature>
<feature type="binding site" evidence="1">
    <location>
        <position position="183"/>
    </location>
    <ligand>
        <name>ATP</name>
        <dbReference type="ChEBI" id="CHEBI:30616"/>
    </ligand>
</feature>
<keyword id="KW-0067">ATP-binding</keyword>
<keyword id="KW-0963">Cytoplasm</keyword>
<keyword id="KW-0418">Kinase</keyword>
<keyword id="KW-0545">Nucleotide biosynthesis</keyword>
<keyword id="KW-0547">Nucleotide-binding</keyword>
<keyword id="KW-0808">Transferase</keyword>
<proteinExistence type="inferred from homology"/>
<gene>
    <name evidence="1" type="primary">adk</name>
    <name type="ordered locus">Dgeo_1846</name>
</gene>
<protein>
    <recommendedName>
        <fullName evidence="1">Adenylate kinase</fullName>
        <shortName evidence="1">AK</shortName>
        <ecNumber evidence="1">2.7.4.3</ecNumber>
    </recommendedName>
    <alternativeName>
        <fullName evidence="1">ATP-AMP transphosphorylase</fullName>
    </alternativeName>
    <alternativeName>
        <fullName evidence="1">ATP:AMP phosphotransferase</fullName>
    </alternativeName>
    <alternativeName>
        <fullName evidence="1">Adenylate monophosphate kinase</fullName>
    </alternativeName>
</protein>
<accession>Q1IX93</accession>
<reference key="1">
    <citation type="submission" date="2006-04" db="EMBL/GenBank/DDBJ databases">
        <title>Complete sequence of chromosome of Deinococcus geothermalis DSM 11300.</title>
        <authorList>
            <person name="Copeland A."/>
            <person name="Lucas S."/>
            <person name="Lapidus A."/>
            <person name="Barry K."/>
            <person name="Detter J.C."/>
            <person name="Glavina del Rio T."/>
            <person name="Hammon N."/>
            <person name="Israni S."/>
            <person name="Dalin E."/>
            <person name="Tice H."/>
            <person name="Pitluck S."/>
            <person name="Brettin T."/>
            <person name="Bruce D."/>
            <person name="Han C."/>
            <person name="Tapia R."/>
            <person name="Saunders E."/>
            <person name="Gilna P."/>
            <person name="Schmutz J."/>
            <person name="Larimer F."/>
            <person name="Land M."/>
            <person name="Hauser L."/>
            <person name="Kyrpides N."/>
            <person name="Kim E."/>
            <person name="Daly M.J."/>
            <person name="Fredrickson J.K."/>
            <person name="Makarova K.S."/>
            <person name="Gaidamakova E.K."/>
            <person name="Zhai M."/>
            <person name="Richardson P."/>
        </authorList>
    </citation>
    <scope>NUCLEOTIDE SEQUENCE [LARGE SCALE GENOMIC DNA]</scope>
    <source>
        <strain>DSM 11300 / CIP 105573 / AG-3a</strain>
    </source>
</reference>
<organism>
    <name type="scientific">Deinococcus geothermalis (strain DSM 11300 / CIP 105573 / AG-3a)</name>
    <dbReference type="NCBI Taxonomy" id="319795"/>
    <lineage>
        <taxon>Bacteria</taxon>
        <taxon>Thermotogati</taxon>
        <taxon>Deinococcota</taxon>
        <taxon>Deinococci</taxon>
        <taxon>Deinococcales</taxon>
        <taxon>Deinococcaceae</taxon>
        <taxon>Deinococcus</taxon>
    </lineage>
</organism>